<accession>Q6G395</accession>
<proteinExistence type="inferred from homology"/>
<protein>
    <recommendedName>
        <fullName evidence="1">NADH-quinone oxidoreductase subunit H</fullName>
        <ecNumber evidence="1">7.1.1.-</ecNumber>
    </recommendedName>
    <alternativeName>
        <fullName evidence="1">NADH dehydrogenase I subunit H</fullName>
    </alternativeName>
    <alternativeName>
        <fullName evidence="1">NDH-1 subunit H</fullName>
    </alternativeName>
</protein>
<organism>
    <name type="scientific">Bartonella henselae (strain ATCC 49882 / DSM 28221 / CCUG 30454 / Houston 1)</name>
    <name type="common">Rochalimaea henselae</name>
    <dbReference type="NCBI Taxonomy" id="283166"/>
    <lineage>
        <taxon>Bacteria</taxon>
        <taxon>Pseudomonadati</taxon>
        <taxon>Pseudomonadota</taxon>
        <taxon>Alphaproteobacteria</taxon>
        <taxon>Hyphomicrobiales</taxon>
        <taxon>Bartonellaceae</taxon>
        <taxon>Bartonella</taxon>
    </lineage>
</organism>
<name>NUOH_BARHE</name>
<sequence>MIYDFFMTWLFPLLIIVGKTLLLLVILLLLVAYLLYADRKIWAAVQLRRGPNVVGPWGLLQSFADLIKFVVKEPIIPAGANKGVFLLAPFVSATLALSTWAVIPVNEGWAVANINVGLLYILAISSLEVYGVIMGGWASNSKYPFLGALRSAAQMVSYEVSIGFVLVTVILVSGSLDLTTIVQKQSHGMGTALGLPFNSFLDWNWLVLFPMFIIFFISALAETNRPPFDLVEAESELVAGHMVEYSSTPYMLFFLGEYVAIVLMCALTTILFLGGWLPPLDVWWLNWVPGIIWFVLKVCFVFFWFAMVKAFVPRYRYDQLMRLGWKVFLPLSLAMVVITAAFLKYTGFA</sequence>
<feature type="chain" id="PRO_0000240059" description="NADH-quinone oxidoreductase subunit H">
    <location>
        <begin position="1"/>
        <end position="349"/>
    </location>
</feature>
<feature type="transmembrane region" description="Helical" evidence="1">
    <location>
        <begin position="11"/>
        <end position="31"/>
    </location>
</feature>
<feature type="transmembrane region" description="Helical" evidence="1">
    <location>
        <begin position="83"/>
        <end position="103"/>
    </location>
</feature>
<feature type="transmembrane region" description="Helical" evidence="1">
    <location>
        <begin position="116"/>
        <end position="136"/>
    </location>
</feature>
<feature type="transmembrane region" description="Helical" evidence="1">
    <location>
        <begin position="162"/>
        <end position="182"/>
    </location>
</feature>
<feature type="transmembrane region" description="Helical" evidence="1">
    <location>
        <begin position="200"/>
        <end position="220"/>
    </location>
</feature>
<feature type="transmembrane region" description="Helical" evidence="1">
    <location>
        <begin position="252"/>
        <end position="272"/>
    </location>
</feature>
<feature type="transmembrane region" description="Helical" evidence="1">
    <location>
        <begin position="288"/>
        <end position="308"/>
    </location>
</feature>
<feature type="transmembrane region" description="Helical" evidence="1">
    <location>
        <begin position="323"/>
        <end position="343"/>
    </location>
</feature>
<gene>
    <name evidence="1" type="primary">nuoH</name>
    <name type="ordered locus">BH08880</name>
</gene>
<comment type="function">
    <text evidence="1">NDH-1 shuttles electrons from NADH, via FMN and iron-sulfur (Fe-S) centers, to quinones in the respiratory chain. The immediate electron acceptor for the enzyme in this species is believed to be ubiquinone. Couples the redox reaction to proton translocation (for every two electrons transferred, four hydrogen ions are translocated across the cytoplasmic membrane), and thus conserves the redox energy in a proton gradient. This subunit may bind ubiquinone.</text>
</comment>
<comment type="catalytic activity">
    <reaction evidence="1">
        <text>a quinone + NADH + 5 H(+)(in) = a quinol + NAD(+) + 4 H(+)(out)</text>
        <dbReference type="Rhea" id="RHEA:57888"/>
        <dbReference type="ChEBI" id="CHEBI:15378"/>
        <dbReference type="ChEBI" id="CHEBI:24646"/>
        <dbReference type="ChEBI" id="CHEBI:57540"/>
        <dbReference type="ChEBI" id="CHEBI:57945"/>
        <dbReference type="ChEBI" id="CHEBI:132124"/>
    </reaction>
</comment>
<comment type="subunit">
    <text evidence="1">NDH-1 is composed of 14 different subunits. Subunits NuoA, H, J, K, L, M, N constitute the membrane sector of the complex.</text>
</comment>
<comment type="subcellular location">
    <subcellularLocation>
        <location evidence="1">Cell inner membrane</location>
        <topology evidence="1">Multi-pass membrane protein</topology>
    </subcellularLocation>
</comment>
<comment type="similarity">
    <text evidence="1">Belongs to the complex I subunit 1 family.</text>
</comment>
<reference key="1">
    <citation type="journal article" date="2004" name="Proc. Natl. Acad. Sci. U.S.A.">
        <title>The louse-borne human pathogen Bartonella quintana is a genomic derivative of the zoonotic agent Bartonella henselae.</title>
        <authorList>
            <person name="Alsmark U.C.M."/>
            <person name="Frank A.C."/>
            <person name="Karlberg E.O."/>
            <person name="Legault B.-A."/>
            <person name="Ardell D.H."/>
            <person name="Canbaeck B."/>
            <person name="Eriksson A.-S."/>
            <person name="Naeslund A.K."/>
            <person name="Handley S.A."/>
            <person name="Huvet M."/>
            <person name="La Scola B."/>
            <person name="Holmberg M."/>
            <person name="Andersson S.G.E."/>
        </authorList>
    </citation>
    <scope>NUCLEOTIDE SEQUENCE [LARGE SCALE GENOMIC DNA]</scope>
    <source>
        <strain>ATCC 49882 / DSM 28221 / CCUG 30454 / Houston 1</strain>
    </source>
</reference>
<dbReference type="EC" id="7.1.1.-" evidence="1"/>
<dbReference type="EMBL" id="BX897699">
    <property type="protein sequence ID" value="CAF27686.1"/>
    <property type="molecule type" value="Genomic_DNA"/>
</dbReference>
<dbReference type="SMR" id="Q6G395"/>
<dbReference type="PaxDb" id="283166-BH08880"/>
<dbReference type="EnsemblBacteria" id="CAF27686">
    <property type="protein sequence ID" value="CAF27686"/>
    <property type="gene ID" value="BH08880"/>
</dbReference>
<dbReference type="KEGG" id="bhe:BH08880"/>
<dbReference type="eggNOG" id="COG1005">
    <property type="taxonomic scope" value="Bacteria"/>
</dbReference>
<dbReference type="Proteomes" id="UP000000421">
    <property type="component" value="Chromosome"/>
</dbReference>
<dbReference type="GO" id="GO:0005886">
    <property type="term" value="C:plasma membrane"/>
    <property type="evidence" value="ECO:0007669"/>
    <property type="project" value="UniProtKB-SubCell"/>
</dbReference>
<dbReference type="GO" id="GO:0003954">
    <property type="term" value="F:NADH dehydrogenase activity"/>
    <property type="evidence" value="ECO:0007669"/>
    <property type="project" value="TreeGrafter"/>
</dbReference>
<dbReference type="GO" id="GO:0016655">
    <property type="term" value="F:oxidoreductase activity, acting on NAD(P)H, quinone or similar compound as acceptor"/>
    <property type="evidence" value="ECO:0007669"/>
    <property type="project" value="UniProtKB-UniRule"/>
</dbReference>
<dbReference type="GO" id="GO:0048038">
    <property type="term" value="F:quinone binding"/>
    <property type="evidence" value="ECO:0007669"/>
    <property type="project" value="UniProtKB-KW"/>
</dbReference>
<dbReference type="GO" id="GO:0009060">
    <property type="term" value="P:aerobic respiration"/>
    <property type="evidence" value="ECO:0007669"/>
    <property type="project" value="TreeGrafter"/>
</dbReference>
<dbReference type="HAMAP" id="MF_01350">
    <property type="entry name" value="NDH1_NuoH"/>
    <property type="match status" value="1"/>
</dbReference>
<dbReference type="InterPro" id="IPR001694">
    <property type="entry name" value="NADH_UbQ_OxRdtase_su1/FPO"/>
</dbReference>
<dbReference type="InterPro" id="IPR018086">
    <property type="entry name" value="NADH_UbQ_OxRdtase_su1_CS"/>
</dbReference>
<dbReference type="NCBIfam" id="NF004741">
    <property type="entry name" value="PRK06076.1-2"/>
    <property type="match status" value="1"/>
</dbReference>
<dbReference type="NCBIfam" id="NF004745">
    <property type="entry name" value="PRK06076.1-6"/>
    <property type="match status" value="1"/>
</dbReference>
<dbReference type="PANTHER" id="PTHR11432">
    <property type="entry name" value="NADH DEHYDROGENASE SUBUNIT 1"/>
    <property type="match status" value="1"/>
</dbReference>
<dbReference type="PANTHER" id="PTHR11432:SF3">
    <property type="entry name" value="NADH-UBIQUINONE OXIDOREDUCTASE CHAIN 1"/>
    <property type="match status" value="1"/>
</dbReference>
<dbReference type="Pfam" id="PF00146">
    <property type="entry name" value="NADHdh"/>
    <property type="match status" value="1"/>
</dbReference>
<dbReference type="PROSITE" id="PS00668">
    <property type="entry name" value="COMPLEX1_ND1_2"/>
    <property type="match status" value="1"/>
</dbReference>
<evidence type="ECO:0000255" key="1">
    <source>
        <dbReference type="HAMAP-Rule" id="MF_01350"/>
    </source>
</evidence>
<keyword id="KW-0997">Cell inner membrane</keyword>
<keyword id="KW-1003">Cell membrane</keyword>
<keyword id="KW-0472">Membrane</keyword>
<keyword id="KW-0520">NAD</keyword>
<keyword id="KW-0874">Quinone</keyword>
<keyword id="KW-1278">Translocase</keyword>
<keyword id="KW-0812">Transmembrane</keyword>
<keyword id="KW-1133">Transmembrane helix</keyword>
<keyword id="KW-0830">Ubiquinone</keyword>